<reference key="1">
    <citation type="journal article" date="2002" name="DNA Res.">
        <title>Complete genome structure of the thermophilic cyanobacterium Thermosynechococcus elongatus BP-1.</title>
        <authorList>
            <person name="Nakamura Y."/>
            <person name="Kaneko T."/>
            <person name="Sato S."/>
            <person name="Ikeuchi M."/>
            <person name="Katoh H."/>
            <person name="Sasamoto S."/>
            <person name="Watanabe A."/>
            <person name="Iriguchi M."/>
            <person name="Kawashima K."/>
            <person name="Kimura T."/>
            <person name="Kishida Y."/>
            <person name="Kiyokawa C."/>
            <person name="Kohara M."/>
            <person name="Matsumoto M."/>
            <person name="Matsuno A."/>
            <person name="Nakazaki N."/>
            <person name="Shimpo S."/>
            <person name="Sugimoto M."/>
            <person name="Takeuchi C."/>
            <person name="Yamada M."/>
            <person name="Tabata S."/>
        </authorList>
    </citation>
    <scope>NUCLEOTIDE SEQUENCE [LARGE SCALE GENOMIC DNA]</scope>
    <source>
        <strain>NIES-2133 / IAM M-273 / BP-1</strain>
    </source>
</reference>
<evidence type="ECO:0000255" key="1">
    <source>
        <dbReference type="HAMAP-Rule" id="MF_00374"/>
    </source>
</evidence>
<evidence type="ECO:0000305" key="2"/>
<organism>
    <name type="scientific">Thermosynechococcus vestitus (strain NIES-2133 / IAM M-273 / BP-1)</name>
    <dbReference type="NCBI Taxonomy" id="197221"/>
    <lineage>
        <taxon>Bacteria</taxon>
        <taxon>Bacillati</taxon>
        <taxon>Cyanobacteriota</taxon>
        <taxon>Cyanophyceae</taxon>
        <taxon>Acaryochloridales</taxon>
        <taxon>Thermosynechococcaceae</taxon>
        <taxon>Thermosynechococcus</taxon>
    </lineage>
</organism>
<keyword id="KW-1185">Reference proteome</keyword>
<keyword id="KW-0687">Ribonucleoprotein</keyword>
<keyword id="KW-0689">Ribosomal protein</keyword>
<accession>Q8DMM4</accession>
<comment type="similarity">
    <text evidence="1">Belongs to the universal ribosomal protein uL29 family.</text>
</comment>
<dbReference type="EMBL" id="BA000039">
    <property type="protein sequence ID" value="BAC07642.1"/>
    <property type="molecule type" value="Genomic_DNA"/>
</dbReference>
<dbReference type="RefSeq" id="NP_680880.1">
    <property type="nucleotide sequence ID" value="NC_004113.1"/>
</dbReference>
<dbReference type="RefSeq" id="WP_011055944.1">
    <property type="nucleotide sequence ID" value="NC_004113.1"/>
</dbReference>
<dbReference type="SMR" id="Q8DMM4"/>
<dbReference type="STRING" id="197221.gene:10746667"/>
<dbReference type="EnsemblBacteria" id="BAC07642">
    <property type="protein sequence ID" value="BAC07642"/>
    <property type="gene ID" value="BAC07642"/>
</dbReference>
<dbReference type="KEGG" id="tel:tsr0089"/>
<dbReference type="PATRIC" id="fig|197221.4.peg.92"/>
<dbReference type="eggNOG" id="COG0255">
    <property type="taxonomic scope" value="Bacteria"/>
</dbReference>
<dbReference type="Proteomes" id="UP000000440">
    <property type="component" value="Chromosome"/>
</dbReference>
<dbReference type="GO" id="GO:0022625">
    <property type="term" value="C:cytosolic large ribosomal subunit"/>
    <property type="evidence" value="ECO:0007669"/>
    <property type="project" value="TreeGrafter"/>
</dbReference>
<dbReference type="GO" id="GO:0003735">
    <property type="term" value="F:structural constituent of ribosome"/>
    <property type="evidence" value="ECO:0007669"/>
    <property type="project" value="InterPro"/>
</dbReference>
<dbReference type="GO" id="GO:0006412">
    <property type="term" value="P:translation"/>
    <property type="evidence" value="ECO:0007669"/>
    <property type="project" value="UniProtKB-UniRule"/>
</dbReference>
<dbReference type="CDD" id="cd00427">
    <property type="entry name" value="Ribosomal_L29_HIP"/>
    <property type="match status" value="1"/>
</dbReference>
<dbReference type="Gene3D" id="1.10.287.310">
    <property type="match status" value="1"/>
</dbReference>
<dbReference type="HAMAP" id="MF_00374">
    <property type="entry name" value="Ribosomal_uL29"/>
    <property type="match status" value="1"/>
</dbReference>
<dbReference type="InterPro" id="IPR050063">
    <property type="entry name" value="Ribosomal_protein_uL29"/>
</dbReference>
<dbReference type="InterPro" id="IPR001854">
    <property type="entry name" value="Ribosomal_uL29"/>
</dbReference>
<dbReference type="InterPro" id="IPR018254">
    <property type="entry name" value="Ribosomal_uL29_CS"/>
</dbReference>
<dbReference type="InterPro" id="IPR036049">
    <property type="entry name" value="Ribosomal_uL29_sf"/>
</dbReference>
<dbReference type="NCBIfam" id="TIGR00012">
    <property type="entry name" value="L29"/>
    <property type="match status" value="1"/>
</dbReference>
<dbReference type="PANTHER" id="PTHR10916">
    <property type="entry name" value="60S RIBOSOMAL PROTEIN L35/50S RIBOSOMAL PROTEIN L29"/>
    <property type="match status" value="1"/>
</dbReference>
<dbReference type="PANTHER" id="PTHR10916:SF0">
    <property type="entry name" value="LARGE RIBOSOMAL SUBUNIT PROTEIN UL29C"/>
    <property type="match status" value="1"/>
</dbReference>
<dbReference type="Pfam" id="PF00831">
    <property type="entry name" value="Ribosomal_L29"/>
    <property type="match status" value="1"/>
</dbReference>
<dbReference type="SUPFAM" id="SSF46561">
    <property type="entry name" value="Ribosomal protein L29 (L29p)"/>
    <property type="match status" value="1"/>
</dbReference>
<dbReference type="PROSITE" id="PS00579">
    <property type="entry name" value="RIBOSOMAL_L29"/>
    <property type="match status" value="1"/>
</dbReference>
<proteinExistence type="inferred from homology"/>
<protein>
    <recommendedName>
        <fullName evidence="1">Large ribosomal subunit protein uL29</fullName>
    </recommendedName>
    <alternativeName>
        <fullName evidence="2">50S ribosomal protein L29</fullName>
    </alternativeName>
</protein>
<sequence>MALTKMKDLRQLSDQEVSDRIAAIKKELFDLRFKKATRQEVKPHQFKHLRHELAQLLTLENERRRSGGQG</sequence>
<gene>
    <name evidence="1" type="primary">rpmC</name>
    <name evidence="1" type="synonym">rpl29</name>
    <name type="ordered locus">tsr0089</name>
</gene>
<name>RL29_THEVB</name>
<feature type="chain" id="PRO_0000130477" description="Large ribosomal subunit protein uL29">
    <location>
        <begin position="1"/>
        <end position="70"/>
    </location>
</feature>